<proteinExistence type="evidence at protein level"/>
<accession>P17386</accession>
<evidence type="ECO:0000255" key="1">
    <source>
        <dbReference type="HAMAP-Rule" id="MF_04006"/>
    </source>
</evidence>
<evidence type="ECO:0000305" key="2"/>
<evidence type="ECO:0007829" key="3">
    <source>
        <dbReference type="PDB" id="6SLM"/>
    </source>
</evidence>
<sequence length="149" mass="17714">MFKNPAERPRKLHELSSALEIPYDELRLNCVYCKGQLTETEVLDFAFTDLTIVYRDDTPHGVCTKCLRFYSKVSEFRWYRYSVYGTTLEKLTNKGICDLLIRCITCQRPLCPEEKQRHLDKKKRFHNIGGRWTGRCIACWRRPRTETQV</sequence>
<feature type="chain" id="PRO_0000133351" description="Protein E6">
    <location>
        <begin position="1"/>
        <end position="149"/>
    </location>
</feature>
<feature type="zinc finger region" evidence="1">
    <location>
        <begin position="30"/>
        <end position="66"/>
    </location>
</feature>
<feature type="zinc finger region" evidence="1">
    <location>
        <begin position="103"/>
        <end position="139"/>
    </location>
</feature>
<feature type="short sequence motif" description="PDZ-binding domain" evidence="1">
    <location>
        <begin position="147"/>
        <end position="149"/>
    </location>
</feature>
<feature type="strand" evidence="3">
    <location>
        <begin position="1"/>
        <end position="3"/>
    </location>
</feature>
<feature type="strand" evidence="3">
    <location>
        <begin position="5"/>
        <end position="7"/>
    </location>
</feature>
<feature type="helix" evidence="3">
    <location>
        <begin position="12"/>
        <end position="19"/>
    </location>
</feature>
<feature type="helix" evidence="3">
    <location>
        <begin position="23"/>
        <end position="25"/>
    </location>
</feature>
<feature type="turn" evidence="3">
    <location>
        <begin position="31"/>
        <end position="33"/>
    </location>
</feature>
<feature type="helix" evidence="3">
    <location>
        <begin position="39"/>
        <end position="47"/>
    </location>
</feature>
<feature type="strand" evidence="3">
    <location>
        <begin position="53"/>
        <end position="55"/>
    </location>
</feature>
<feature type="strand" evidence="3">
    <location>
        <begin position="58"/>
        <end position="61"/>
    </location>
</feature>
<feature type="helix" evidence="3">
    <location>
        <begin position="64"/>
        <end position="77"/>
    </location>
</feature>
<feature type="strand" evidence="3">
    <location>
        <begin position="78"/>
        <end position="83"/>
    </location>
</feature>
<feature type="helix" evidence="3">
    <location>
        <begin position="85"/>
        <end position="92"/>
    </location>
</feature>
<feature type="helix" evidence="3">
    <location>
        <begin position="96"/>
        <end position="98"/>
    </location>
</feature>
<feature type="turn" evidence="3">
    <location>
        <begin position="104"/>
        <end position="106"/>
    </location>
</feature>
<feature type="helix" evidence="3">
    <location>
        <begin position="112"/>
        <end position="121"/>
    </location>
</feature>
<feature type="strand" evidence="3">
    <location>
        <begin position="125"/>
        <end position="128"/>
    </location>
</feature>
<feature type="strand" evidence="3">
    <location>
        <begin position="131"/>
        <end position="134"/>
    </location>
</feature>
<feature type="turn" evidence="3">
    <location>
        <begin position="138"/>
        <end position="141"/>
    </location>
</feature>
<organism>
    <name type="scientific">Human papillomavirus 31</name>
    <dbReference type="NCBI Taxonomy" id="10585"/>
    <lineage>
        <taxon>Viruses</taxon>
        <taxon>Monodnaviria</taxon>
        <taxon>Shotokuvirae</taxon>
        <taxon>Cossaviricota</taxon>
        <taxon>Papovaviricetes</taxon>
        <taxon>Zurhausenvirales</taxon>
        <taxon>Papillomaviridae</taxon>
        <taxon>Firstpapillomavirinae</taxon>
        <taxon>Alphapapillomavirus</taxon>
        <taxon>Alphapapillomavirus 9</taxon>
    </lineage>
</organism>
<name>VE6_HPV31</name>
<gene>
    <name evidence="1" type="primary">E6</name>
</gene>
<keyword id="KW-0002">3D-structure</keyword>
<keyword id="KW-0010">Activator</keyword>
<keyword id="KW-0238">DNA-binding</keyword>
<keyword id="KW-0244">Early protein</keyword>
<keyword id="KW-1035">Host cytoplasm</keyword>
<keyword id="KW-1048">Host nucleus</keyword>
<keyword id="KW-0945">Host-virus interaction</keyword>
<keyword id="KW-1090">Inhibition of host innate immune response by virus</keyword>
<keyword id="KW-1092">Inhibition of host IRF3 by virus</keyword>
<keyword id="KW-1113">Inhibition of host RLR pathway by virus</keyword>
<keyword id="KW-0479">Metal-binding</keyword>
<keyword id="KW-1119">Modulation of host cell apoptosis by virus</keyword>
<keyword id="KW-0553">Oncogene</keyword>
<keyword id="KW-1185">Reference proteome</keyword>
<keyword id="KW-0804">Transcription</keyword>
<keyword id="KW-0805">Transcription regulation</keyword>
<keyword id="KW-0899">Viral immunoevasion</keyword>
<keyword id="KW-0862">Zinc</keyword>
<keyword id="KW-0863">Zinc-finger</keyword>
<reference key="1">
    <citation type="journal article" date="1989" name="Virology">
        <title>Nucleotide sequence of human papillomavirus type 31: a cervical neoplasia-associated virus.</title>
        <authorList>
            <person name="Goldsborough M.D."/>
            <person name="Disilvestre D."/>
            <person name="Temple G.F."/>
            <person name="Lorincz A.T."/>
        </authorList>
    </citation>
    <scope>NUCLEOTIDE SEQUENCE [GENOMIC DNA]</scope>
</reference>
<reference key="2">
    <citation type="journal article" date="2002" name="Biochem. Biophys. Res. Commun.">
        <title>Interaction of oncogenic papillomavirus E6 proteins with fibulin-1.</title>
        <authorList>
            <person name="Du M."/>
            <person name="Fan X."/>
            <person name="Hong E."/>
            <person name="Chen J.J."/>
        </authorList>
    </citation>
    <scope>INTERACTION WITH HUMAN FBLN1</scope>
    <scope>INHIBITION OF E6-MEDIATED TRANSFORMATION</scope>
</reference>
<reference key="3">
    <citation type="journal article" date="2004" name="J. Virol.">
        <title>Role of the PDZ domain-binding motif of the oncoprotein E6 in the pathogenesis of human papillomavirus type 31.</title>
        <authorList>
            <person name="Lee C."/>
            <person name="Laimins L.A."/>
        </authorList>
    </citation>
    <scope>PDZ DOMAIN-BINDING MOTIF</scope>
</reference>
<comment type="function">
    <text evidence="1">Plays a major role in the induction and maintenance of cellular transformation. Acts mainly as an oncoprotein by stimulating the destruction of many host cell key regulatory proteins. E6 associates with host UBE3A/E6-AP ubiquitin-protein ligase, and inactivates tumor suppressors TP53 and TP73 by targeting them to the 26S proteasome for degradation. In turn, DNA damage and chromosomal instabilities increase and lead to cell proliferation and cancer development. The complex E6/E6AP targets several other substrates to degradation via the proteasome including host DLG1 or NFX1, a repressor of human telomerase reverse transcriptase (hTERT). The resulting increased expression of hTERT prevents the shortening of telomere length leading to cell immortalization. Other cellular targets including BAK1, Fas-associated death domain-containing protein (FADD) and procaspase 8, are degraded by E6/E6AP causing inhibition of apoptosis. E6 also inhibits immune response by interacting with host IRF3 and TYK2. These interactions prevent IRF3 transcriptional activities and inhibit TYK2-mediated JAK-STAT activation by interferon alpha resulting in inhibition of the interferon signaling pathway.</text>
</comment>
<comment type="subunit">
    <text evidence="1">Forms homodimers. Interacts with ubiquitin-protein ligase UBE3A/E6-AP and thus forms a complex with human TP53. Interacts with human NFX1 and MAGI3. Interacts with human IRF3; this interaction inhibits the establishment of antiviral state. Interacts with human TYK2; this interaction inhibits JAK-STAT activation by interferon alpha. Interacts with host DLG1; this interaction leads to the proteasomal degradation of DLG1.</text>
</comment>
<comment type="interaction">
    <interactant intactId="EBI-8516807">
        <id>P17386</id>
    </interactant>
    <interactant intactId="EBI-357481">
        <id>Q12959</id>
        <label>DLG1</label>
    </interactant>
    <organismsDiffer>true</organismsDiffer>
    <experiments>2</experiments>
</comment>
<comment type="subcellular location">
    <subcellularLocation>
        <location evidence="1">Host cytoplasm</location>
    </subcellularLocation>
    <subcellularLocation>
        <location evidence="1">Host nucleus</location>
    </subcellularLocation>
</comment>
<comment type="miscellaneous">
    <text evidence="1">Belongs to the high risk human alphapapillomavirus family. The cancer-causing human papillomavirus E6 protein has a unique carboxy terminal PDZ domain containing substrate.</text>
</comment>
<comment type="similarity">
    <text evidence="2">Belongs to the papillomaviridae E6 protein family.</text>
</comment>
<dbReference type="EMBL" id="J04353">
    <property type="protein sequence ID" value="AAA46950.1"/>
    <property type="molecule type" value="Genomic_DNA"/>
</dbReference>
<dbReference type="PIR" id="A32444">
    <property type="entry name" value="W6WL31"/>
</dbReference>
<dbReference type="PDB" id="6SLM">
    <property type="method" value="X-ray"/>
    <property type="resolution" value="2.80 A"/>
    <property type="chains" value="A=1-149"/>
</dbReference>
<dbReference type="PDBsum" id="6SLM"/>
<dbReference type="SMR" id="P17386"/>
<dbReference type="IntAct" id="P17386">
    <property type="interactions" value="5"/>
</dbReference>
<dbReference type="MINT" id="P17386"/>
<dbReference type="Proteomes" id="UP000009116">
    <property type="component" value="Genome"/>
</dbReference>
<dbReference type="GO" id="GO:0030430">
    <property type="term" value="C:host cell cytoplasm"/>
    <property type="evidence" value="ECO:0007669"/>
    <property type="project" value="UniProtKB-SubCell"/>
</dbReference>
<dbReference type="GO" id="GO:0042025">
    <property type="term" value="C:host cell nucleus"/>
    <property type="evidence" value="ECO:0007669"/>
    <property type="project" value="UniProtKB-SubCell"/>
</dbReference>
<dbReference type="GO" id="GO:0003677">
    <property type="term" value="F:DNA binding"/>
    <property type="evidence" value="ECO:0007669"/>
    <property type="project" value="UniProtKB-UniRule"/>
</dbReference>
<dbReference type="GO" id="GO:0030165">
    <property type="term" value="F:PDZ domain binding"/>
    <property type="evidence" value="ECO:0007669"/>
    <property type="project" value="UniProtKB-UniRule"/>
</dbReference>
<dbReference type="GO" id="GO:0008270">
    <property type="term" value="F:zinc ion binding"/>
    <property type="evidence" value="ECO:0007669"/>
    <property type="project" value="UniProtKB-KW"/>
</dbReference>
<dbReference type="GO" id="GO:0006351">
    <property type="term" value="P:DNA-templated transcription"/>
    <property type="evidence" value="ECO:0007669"/>
    <property type="project" value="UniProtKB-UniRule"/>
</dbReference>
<dbReference type="GO" id="GO:0006355">
    <property type="term" value="P:regulation of DNA-templated transcription"/>
    <property type="evidence" value="ECO:0007669"/>
    <property type="project" value="UniProtKB-UniRule"/>
</dbReference>
<dbReference type="GO" id="GO:0052150">
    <property type="term" value="P:symbiont-mediated perturbation of host apoptosis"/>
    <property type="evidence" value="ECO:0007669"/>
    <property type="project" value="UniProtKB-KW"/>
</dbReference>
<dbReference type="GO" id="GO:0039648">
    <property type="term" value="P:symbiont-mediated perturbation of host ubiquitin-like protein modification"/>
    <property type="evidence" value="ECO:0007669"/>
    <property type="project" value="UniProtKB-UniRule"/>
</dbReference>
<dbReference type="GO" id="GO:0039548">
    <property type="term" value="P:symbiont-mediated suppression of host cytoplasmic pattern recognition receptor signaling pathway via inhibition of IRF3 activity"/>
    <property type="evidence" value="ECO:0007669"/>
    <property type="project" value="UniProtKB-UniRule"/>
</dbReference>
<dbReference type="GO" id="GO:0039502">
    <property type="term" value="P:symbiont-mediated suppression of host type I interferon-mediated signaling pathway"/>
    <property type="evidence" value="ECO:0007669"/>
    <property type="project" value="UniProtKB-UniRule"/>
</dbReference>
<dbReference type="FunFam" id="3.30.240.40:FF:000001">
    <property type="entry name" value="Protein E6"/>
    <property type="match status" value="1"/>
</dbReference>
<dbReference type="FunFam" id="3.30.240.40:FF:000002">
    <property type="entry name" value="Protein E6"/>
    <property type="match status" value="1"/>
</dbReference>
<dbReference type="Gene3D" id="3.30.240.40">
    <property type="entry name" value="E6 early regulatory protein"/>
    <property type="match status" value="2"/>
</dbReference>
<dbReference type="HAMAP" id="MF_04006">
    <property type="entry name" value="HPV_E6"/>
    <property type="match status" value="1"/>
</dbReference>
<dbReference type="InterPro" id="IPR001334">
    <property type="entry name" value="E6"/>
</dbReference>
<dbReference type="InterPro" id="IPR038575">
    <property type="entry name" value="E6_sf"/>
</dbReference>
<dbReference type="Pfam" id="PF00518">
    <property type="entry name" value="E6"/>
    <property type="match status" value="1"/>
</dbReference>
<dbReference type="SUPFAM" id="SSF161229">
    <property type="entry name" value="E6 C-terminal domain-like"/>
    <property type="match status" value="2"/>
</dbReference>
<organismHost>
    <name type="scientific">Homo sapiens</name>
    <name type="common">Human</name>
    <dbReference type="NCBI Taxonomy" id="9606"/>
</organismHost>
<protein>
    <recommendedName>
        <fullName evidence="1">Protein E6</fullName>
    </recommendedName>
</protein>